<dbReference type="EC" id="1.1.1.1" evidence="2"/>
<dbReference type="EMBL" id="X07774">
    <property type="protein sequence ID" value="CAA30600.1"/>
    <property type="molecule type" value="mRNA"/>
</dbReference>
<dbReference type="EMBL" id="X12732">
    <property type="protein sequence ID" value="CAB51640.1"/>
    <property type="molecule type" value="Genomic_DNA"/>
</dbReference>
<dbReference type="PIR" id="S01893">
    <property type="entry name" value="S01893"/>
</dbReference>
<dbReference type="SMR" id="P05336"/>
<dbReference type="ExpressionAtlas" id="P05336">
    <property type="expression patterns" value="baseline and differential"/>
</dbReference>
<dbReference type="GO" id="GO:0005829">
    <property type="term" value="C:cytosol"/>
    <property type="evidence" value="ECO:0007669"/>
    <property type="project" value="TreeGrafter"/>
</dbReference>
<dbReference type="GO" id="GO:0004022">
    <property type="term" value="F:alcohol dehydrogenase (NAD+) activity"/>
    <property type="evidence" value="ECO:0007669"/>
    <property type="project" value="UniProtKB-EC"/>
</dbReference>
<dbReference type="GO" id="GO:0051903">
    <property type="term" value="F:S-(hydroxymethyl)glutathione dehydrogenase [NAD(P)+] activity"/>
    <property type="evidence" value="ECO:0007669"/>
    <property type="project" value="TreeGrafter"/>
</dbReference>
<dbReference type="GO" id="GO:0008270">
    <property type="term" value="F:zinc ion binding"/>
    <property type="evidence" value="ECO:0007669"/>
    <property type="project" value="InterPro"/>
</dbReference>
<dbReference type="GO" id="GO:0046294">
    <property type="term" value="P:formaldehyde catabolic process"/>
    <property type="evidence" value="ECO:0007669"/>
    <property type="project" value="TreeGrafter"/>
</dbReference>
<dbReference type="CDD" id="cd08301">
    <property type="entry name" value="alcohol_DH_plants"/>
    <property type="match status" value="1"/>
</dbReference>
<dbReference type="FunFam" id="3.90.180.10:FF:000067">
    <property type="entry name" value="alcohol dehydrogenase 1-like isoform X1"/>
    <property type="match status" value="1"/>
</dbReference>
<dbReference type="FunFam" id="3.40.50.720:FF:001292">
    <property type="entry name" value="Alcohol dehydrogenase class-P"/>
    <property type="match status" value="1"/>
</dbReference>
<dbReference type="Gene3D" id="3.90.180.10">
    <property type="entry name" value="Medium-chain alcohol dehydrogenases, catalytic domain"/>
    <property type="match status" value="1"/>
</dbReference>
<dbReference type="Gene3D" id="3.40.50.720">
    <property type="entry name" value="NAD(P)-binding Rossmann-like Domain"/>
    <property type="match status" value="1"/>
</dbReference>
<dbReference type="InterPro" id="IPR013149">
    <property type="entry name" value="ADH-like_C"/>
</dbReference>
<dbReference type="InterPro" id="IPR013154">
    <property type="entry name" value="ADH-like_N"/>
</dbReference>
<dbReference type="InterPro" id="IPR002328">
    <property type="entry name" value="ADH_Zn_CS"/>
</dbReference>
<dbReference type="InterPro" id="IPR011032">
    <property type="entry name" value="GroES-like_sf"/>
</dbReference>
<dbReference type="InterPro" id="IPR036291">
    <property type="entry name" value="NAD(P)-bd_dom_sf"/>
</dbReference>
<dbReference type="PANTHER" id="PTHR43880">
    <property type="entry name" value="ALCOHOL DEHYDROGENASE"/>
    <property type="match status" value="1"/>
</dbReference>
<dbReference type="PANTHER" id="PTHR43880:SF9">
    <property type="entry name" value="ALCOHOL DEHYDROGENASE 1"/>
    <property type="match status" value="1"/>
</dbReference>
<dbReference type="Pfam" id="PF08240">
    <property type="entry name" value="ADH_N"/>
    <property type="match status" value="1"/>
</dbReference>
<dbReference type="Pfam" id="PF00107">
    <property type="entry name" value="ADH_zinc_N"/>
    <property type="match status" value="1"/>
</dbReference>
<dbReference type="SUPFAM" id="SSF50129">
    <property type="entry name" value="GroES-like"/>
    <property type="match status" value="2"/>
</dbReference>
<dbReference type="SUPFAM" id="SSF51735">
    <property type="entry name" value="NAD(P)-binding Rossmann-fold domains"/>
    <property type="match status" value="1"/>
</dbReference>
<dbReference type="PROSITE" id="PS00059">
    <property type="entry name" value="ADH_ZINC"/>
    <property type="match status" value="1"/>
</dbReference>
<feature type="chain" id="PRO_0000160699" description="Alcohol dehydrogenase 1">
    <location>
        <begin position="1"/>
        <end position="379"/>
    </location>
</feature>
<feature type="binding site" evidence="2">
    <location>
        <position position="47"/>
    </location>
    <ligand>
        <name>Zn(2+)</name>
        <dbReference type="ChEBI" id="CHEBI:29105"/>
        <label>1</label>
        <note>catalytic</note>
    </ligand>
</feature>
<feature type="binding site" evidence="2">
    <location>
        <position position="49"/>
    </location>
    <ligand>
        <name>an alcohol</name>
        <dbReference type="ChEBI" id="CHEBI:30879"/>
    </ligand>
</feature>
<feature type="binding site" evidence="2">
    <location>
        <position position="49"/>
    </location>
    <ligand>
        <name>NAD(+)</name>
        <dbReference type="ChEBI" id="CHEBI:57540"/>
    </ligand>
</feature>
<feature type="binding site" evidence="2">
    <location>
        <position position="49"/>
    </location>
    <ligand>
        <name>Zn(2+)</name>
        <dbReference type="ChEBI" id="CHEBI:29105"/>
        <label>1</label>
        <note>catalytic</note>
    </ligand>
</feature>
<feature type="binding site" evidence="1">
    <location>
        <position position="69"/>
    </location>
    <ligand>
        <name>an alcohol</name>
        <dbReference type="ChEBI" id="CHEBI:30879"/>
    </ligand>
</feature>
<feature type="binding site" evidence="2">
    <location>
        <position position="69"/>
    </location>
    <ligand>
        <name>Zn(2+)</name>
        <dbReference type="ChEBI" id="CHEBI:29105"/>
        <label>1</label>
        <note>catalytic</note>
    </ligand>
</feature>
<feature type="binding site" evidence="2">
    <location>
        <position position="99"/>
    </location>
    <ligand>
        <name>Zn(2+)</name>
        <dbReference type="ChEBI" id="CHEBI:29105"/>
        <label>2</label>
    </ligand>
</feature>
<feature type="binding site" evidence="2">
    <location>
        <position position="102"/>
    </location>
    <ligand>
        <name>Zn(2+)</name>
        <dbReference type="ChEBI" id="CHEBI:29105"/>
        <label>2</label>
    </ligand>
</feature>
<feature type="binding site" evidence="2">
    <location>
        <position position="105"/>
    </location>
    <ligand>
        <name>Zn(2+)</name>
        <dbReference type="ChEBI" id="CHEBI:29105"/>
        <label>2</label>
    </ligand>
</feature>
<feature type="binding site" evidence="2">
    <location>
        <position position="113"/>
    </location>
    <ligand>
        <name>Zn(2+)</name>
        <dbReference type="ChEBI" id="CHEBI:29105"/>
        <label>2</label>
    </ligand>
</feature>
<feature type="binding site" evidence="2">
    <location>
        <position position="177"/>
    </location>
    <ligand>
        <name>Zn(2+)</name>
        <dbReference type="ChEBI" id="CHEBI:29105"/>
        <label>1</label>
        <note>catalytic</note>
    </ligand>
</feature>
<feature type="binding site" evidence="2">
    <location>
        <begin position="202"/>
        <end position="207"/>
    </location>
    <ligand>
        <name>NAD(+)</name>
        <dbReference type="ChEBI" id="CHEBI:57540"/>
    </ligand>
</feature>
<feature type="binding site" evidence="2">
    <location>
        <position position="226"/>
    </location>
    <ligand>
        <name>NAD(+)</name>
        <dbReference type="ChEBI" id="CHEBI:57540"/>
    </ligand>
</feature>
<feature type="binding site" evidence="2">
    <location>
        <position position="231"/>
    </location>
    <ligand>
        <name>NAD(+)</name>
        <dbReference type="ChEBI" id="CHEBI:57540"/>
    </ligand>
</feature>
<feature type="binding site" evidence="2">
    <location>
        <position position="272"/>
    </location>
    <ligand>
        <name>NAD(+)</name>
        <dbReference type="ChEBI" id="CHEBI:57540"/>
    </ligand>
</feature>
<feature type="binding site" evidence="1">
    <location>
        <begin position="295"/>
        <end position="297"/>
    </location>
    <ligand>
        <name>NAD(+)</name>
        <dbReference type="ChEBI" id="CHEBI:57540"/>
    </ligand>
</feature>
<feature type="binding site" evidence="2">
    <location>
        <position position="295"/>
    </location>
    <ligand>
        <name>NAD(+)</name>
        <dbReference type="ChEBI" id="CHEBI:57540"/>
    </ligand>
</feature>
<feature type="binding site" evidence="2">
    <location>
        <position position="322"/>
    </location>
    <ligand>
        <name>NAD(+)</name>
        <dbReference type="ChEBI" id="CHEBI:57540"/>
    </ligand>
</feature>
<feature type="binding site" evidence="2">
    <location>
        <position position="372"/>
    </location>
    <ligand>
        <name>NAD(+)</name>
        <dbReference type="ChEBI" id="CHEBI:57540"/>
    </ligand>
</feature>
<feature type="sequence conflict" description="In Ref. 2; CAB51640." evidence="4" ref="2">
    <original>I</original>
    <variation>T</variation>
    <location>
        <position position="74"/>
    </location>
</feature>
<feature type="sequence conflict" description="In Ref. 2; CAB51640." evidence="4" ref="2">
    <original>P</original>
    <variation>A</variation>
    <location>
        <position position="93"/>
    </location>
</feature>
<feature type="sequence conflict" description="In Ref. 2; CAB51640." evidence="4" ref="2">
    <original>IG</original>
    <variation>NR</variation>
    <location>
        <begin position="126"/>
        <end position="127"/>
    </location>
</feature>
<feature type="sequence conflict" description="In Ref. 2; CAB51640." evidence="4" ref="2">
    <original>S</original>
    <variation>F</variation>
    <location>
        <position position="134"/>
    </location>
</feature>
<feature type="sequence conflict" description="In Ref. 2; CAB51640." evidence="4" ref="2">
    <original>A</original>
    <variation>S</variation>
    <location>
        <position position="205"/>
    </location>
</feature>
<feature type="sequence conflict" description="In Ref. 2; CAB51640." evidence="4" ref="2">
    <original>A</original>
    <variation>T</variation>
    <location>
        <position position="210"/>
    </location>
</feature>
<feature type="sequence conflict" description="In Ref. 2; CAB51640." evidence="4" ref="2">
    <original>V</original>
    <variation>I</variation>
    <location>
        <position position="225"/>
    </location>
</feature>
<feature type="sequence conflict" description="In Ref. 2; CAB51640." evidence="4" ref="2">
    <original>V</original>
    <variation>F</variation>
    <location>
        <position position="230"/>
    </location>
</feature>
<feature type="sequence conflict" description="In Ref. 2; CAB51640." evidence="4" ref="2">
    <original>D</original>
    <variation>A</variation>
    <location>
        <position position="248"/>
    </location>
</feature>
<reference key="1">
    <citation type="journal article" date="1988" name="Nucleic Acids Res.">
        <title>Nucleotide sequence of a complete barley alcohol dehydrogenase 1 cDNA.</title>
        <authorList>
            <person name="Good A."/>
            <person name="Pelcher L.E."/>
            <person name="Crosby W.L."/>
        </authorList>
    </citation>
    <scope>NUCLEOTIDE SEQUENCE [MRNA]</scope>
    <source>
        <strain>cv. Himalaya</strain>
    </source>
</reference>
<reference key="2">
    <citation type="journal article" date="1988" name="Plant Mol. Biol.">
        <title>Molecular analysis of the alcohol dehydrogenase gene family of barley.</title>
        <authorList>
            <person name="Trick M."/>
            <person name="Dennis E.S."/>
            <person name="Edwards K.J.R."/>
            <person name="Peacock W.J."/>
        </authorList>
        <dbReference type="AGRICOLA" id="IND92000066"/>
    </citation>
    <scope>NUCLEOTIDE SEQUENCE [GENOMIC DNA] OF 74-304</scope>
    <scope>HOMODIMER</scope>
    <source>
        <strain>cv. Proctor</strain>
    </source>
</reference>
<evidence type="ECO:0000250" key="1">
    <source>
        <dbReference type="UniProtKB" id="P00327"/>
    </source>
</evidence>
<evidence type="ECO:0000250" key="2">
    <source>
        <dbReference type="UniProtKB" id="P06525"/>
    </source>
</evidence>
<evidence type="ECO:0000269" key="3">
    <source ref="2"/>
</evidence>
<evidence type="ECO:0000305" key="4"/>
<comment type="catalytic activity">
    <reaction evidence="2">
        <text>a primary alcohol + NAD(+) = an aldehyde + NADH + H(+)</text>
        <dbReference type="Rhea" id="RHEA:10736"/>
        <dbReference type="ChEBI" id="CHEBI:15378"/>
        <dbReference type="ChEBI" id="CHEBI:15734"/>
        <dbReference type="ChEBI" id="CHEBI:17478"/>
        <dbReference type="ChEBI" id="CHEBI:57540"/>
        <dbReference type="ChEBI" id="CHEBI:57945"/>
        <dbReference type="EC" id="1.1.1.1"/>
    </reaction>
</comment>
<comment type="catalytic activity">
    <reaction evidence="2">
        <text>a secondary alcohol + NAD(+) = a ketone + NADH + H(+)</text>
        <dbReference type="Rhea" id="RHEA:10740"/>
        <dbReference type="ChEBI" id="CHEBI:15378"/>
        <dbReference type="ChEBI" id="CHEBI:17087"/>
        <dbReference type="ChEBI" id="CHEBI:35681"/>
        <dbReference type="ChEBI" id="CHEBI:57540"/>
        <dbReference type="ChEBI" id="CHEBI:57945"/>
        <dbReference type="EC" id="1.1.1.1"/>
    </reaction>
</comment>
<comment type="cofactor">
    <cofactor evidence="2">
        <name>Zn(2+)</name>
        <dbReference type="ChEBI" id="CHEBI:29105"/>
    </cofactor>
    <text evidence="2">Binds 2 Zn(2+) ions per subunit.</text>
</comment>
<comment type="subunit">
    <text evidence="3">Homodimer.</text>
</comment>
<comment type="subcellular location">
    <subcellularLocation>
        <location evidence="2">Cytoplasm</location>
    </subcellularLocation>
</comment>
<comment type="similarity">
    <text evidence="4">Belongs to the zinc-containing alcohol dehydrogenase family.</text>
</comment>
<protein>
    <recommendedName>
        <fullName>Alcohol dehydrogenase 1</fullName>
        <ecNumber evidence="2">1.1.1.1</ecNumber>
    </recommendedName>
</protein>
<proteinExistence type="evidence at transcript level"/>
<organism>
    <name type="scientific">Hordeum vulgare</name>
    <name type="common">Barley</name>
    <dbReference type="NCBI Taxonomy" id="4513"/>
    <lineage>
        <taxon>Eukaryota</taxon>
        <taxon>Viridiplantae</taxon>
        <taxon>Streptophyta</taxon>
        <taxon>Embryophyta</taxon>
        <taxon>Tracheophyta</taxon>
        <taxon>Spermatophyta</taxon>
        <taxon>Magnoliopsida</taxon>
        <taxon>Liliopsida</taxon>
        <taxon>Poales</taxon>
        <taxon>Poaceae</taxon>
        <taxon>BOP clade</taxon>
        <taxon>Pooideae</taxon>
        <taxon>Triticodae</taxon>
        <taxon>Triticeae</taxon>
        <taxon>Hordeinae</taxon>
        <taxon>Hordeum</taxon>
    </lineage>
</organism>
<name>ADH1_HORVU</name>
<keyword id="KW-0963">Cytoplasm</keyword>
<keyword id="KW-0479">Metal-binding</keyword>
<keyword id="KW-0520">NAD</keyword>
<keyword id="KW-0560">Oxidoreductase</keyword>
<keyword id="KW-0862">Zinc</keyword>
<accession>P05336</accession>
<accession>Q40011</accession>
<accession>Q40012</accession>
<accession>Q40013</accession>
<accession>Q40014</accession>
<sequence>MATAGKVIKCKAAVAWEAGKPLTMEEVEVAPPQAMEVRVKILFTSLCHTDVYFWEAKGQIPMFPRIFGHEAGGIVESVGEGVTDVAPGDHVLPVFTGECKECPHCKSAESNMCDLLRINTDRGVMIGDGKSRFSIGGKPIYHFVGTSTFSEYTVMHVGCVAKINPEAPLDKVCVLSCGISTGLGASINVAKPPKGSTVAIFGLGAVGLAAAEGARIAGASRIIGVDLNAVRFEEARKFGCTEFVNPKDHTKPVQQVLADMTNGGVDRSVECTGNVNAMIQAFECVHDGWGVAVLVGVPHKDAEFKTHPMNFLNERTLKGTFFGNFKPRTDLPNVVEMYMKKELEVEKFITHSVPFSEINTAFDLMAKGEGIRCIIRMDN</sequence>
<gene>
    <name type="primary">ADH1</name>
</gene>